<sequence>MSSNELVDQIMAQVIARVATPEQQAIPENNPPTRETAMAEKSCSLTEFVGTAIGDTVGLVIANVDSALLDAMKLEKRYRSIGILGARTGAGPHIMAADEAVKATNTEVVSIELPRDTKGGAGHGSLIILGGNDVSDVKRGIEVALKELDRTFGDVYANEAGHIEMQYTARASYALEKAFGAPIGRACGVIVGAPASVGVLMADTALKSANVEVVAYSSPAHGTSFSNEAILVISGDSGAVRQAVISAREIGKTVLGTLGSEPKNDRPSYI</sequence>
<proteinExistence type="evidence at protein level"/>
<protein>
    <recommendedName>
        <fullName evidence="7">Bacterial microcompartment shell protein PduB</fullName>
    </recommendedName>
    <alternativeName>
        <fullName evidence="8">Bacterial microcompartment protein homotrimer</fullName>
        <shortName evidence="8">BMC-T</shortName>
    </alternativeName>
    <alternativeName>
        <fullName>Propanediol utilization protein PduB</fullName>
    </alternativeName>
</protein>
<evidence type="ECO:0000250" key="1">
    <source>
        <dbReference type="UniProtKB" id="A5VMB3"/>
    </source>
</evidence>
<evidence type="ECO:0000250" key="2">
    <source>
        <dbReference type="UniProtKB" id="P37449"/>
    </source>
</evidence>
<evidence type="ECO:0000255" key="3">
    <source>
        <dbReference type="PROSITE-ProRule" id="PRU01279"/>
    </source>
</evidence>
<evidence type="ECO:0000269" key="4">
    <source>
    </source>
</evidence>
<evidence type="ECO:0000269" key="5">
    <source>
    </source>
</evidence>
<evidence type="ECO:0000269" key="6">
    <source>
    </source>
</evidence>
<evidence type="ECO:0000303" key="7">
    <source>
    </source>
</evidence>
<evidence type="ECO:0000305" key="8"/>
<evidence type="ECO:0000305" key="9">
    <source>
    </source>
</evidence>
<accession>B1VB63</accession>
<gene>
    <name evidence="7" type="primary">pduB</name>
</gene>
<keyword id="KW-0877">Alternative promoter usage</keyword>
<keyword id="KW-1283">Bacterial microcompartment</keyword>
<dbReference type="EMBL" id="AM498294">
    <property type="protein sequence ID" value="CAM57284.1"/>
    <property type="molecule type" value="Genomic_DNA"/>
</dbReference>
<dbReference type="SMR" id="B1VB63"/>
<dbReference type="UniPathway" id="UPA00621"/>
<dbReference type="GO" id="GO:0031469">
    <property type="term" value="C:bacterial microcompartment"/>
    <property type="evidence" value="ECO:0007669"/>
    <property type="project" value="UniProtKB-SubCell"/>
</dbReference>
<dbReference type="GO" id="GO:0005198">
    <property type="term" value="F:structural molecule activity"/>
    <property type="evidence" value="ECO:0007669"/>
    <property type="project" value="InterPro"/>
</dbReference>
<dbReference type="GO" id="GO:0051144">
    <property type="term" value="P:propanediol catabolic process"/>
    <property type="evidence" value="ECO:0007669"/>
    <property type="project" value="UniProtKB-UniPathway"/>
</dbReference>
<dbReference type="CDD" id="cd07047">
    <property type="entry name" value="BMC_PduB_repeat1"/>
    <property type="match status" value="1"/>
</dbReference>
<dbReference type="CDD" id="cd07048">
    <property type="entry name" value="BMC_PduB_repeat2"/>
    <property type="match status" value="1"/>
</dbReference>
<dbReference type="Gene3D" id="3.30.70.1710">
    <property type="match status" value="2"/>
</dbReference>
<dbReference type="InterPro" id="IPR044870">
    <property type="entry name" value="BMC_CP"/>
</dbReference>
<dbReference type="InterPro" id="IPR000249">
    <property type="entry name" value="BMC_dom"/>
</dbReference>
<dbReference type="InterPro" id="IPR037233">
    <property type="entry name" value="CcmK-like_sf"/>
</dbReference>
<dbReference type="InterPro" id="IPR009193">
    <property type="entry name" value="EutL_PduB"/>
</dbReference>
<dbReference type="InterPro" id="IPR030984">
    <property type="entry name" value="PduB"/>
</dbReference>
<dbReference type="NCBIfam" id="TIGR04501">
    <property type="entry name" value="microcomp_PduB"/>
    <property type="match status" value="1"/>
</dbReference>
<dbReference type="NCBIfam" id="NF011944">
    <property type="entry name" value="PRK15415.1"/>
    <property type="match status" value="1"/>
</dbReference>
<dbReference type="Pfam" id="PF00936">
    <property type="entry name" value="BMC"/>
    <property type="match status" value="2"/>
</dbReference>
<dbReference type="PIRSF" id="PIRSF012290">
    <property type="entry name" value="EutL_PduB"/>
    <property type="match status" value="1"/>
</dbReference>
<dbReference type="SMART" id="SM00877">
    <property type="entry name" value="BMC"/>
    <property type="match status" value="2"/>
</dbReference>
<dbReference type="SUPFAM" id="SSF143414">
    <property type="entry name" value="CcmK-like"/>
    <property type="match status" value="2"/>
</dbReference>
<dbReference type="PROSITE" id="PS51931">
    <property type="entry name" value="BMC_CP"/>
    <property type="match status" value="2"/>
</dbReference>
<comment type="function">
    <text evidence="2 4">The two proteins produced are among the major shell proteins of the bacterial microcompartment (BMC) shell dedicated to 1,2-propanediol (1,2-PD) degradation. Overexpression of the gene gives large amorphous intracellular structures; when only PduB is overexpressed large circular bodies are observed which contain concentric rings, whereas with PduB' overexpression internal bodies with regular straight-lined structures were generated (PubMed:18332146). The N-terminus of the long form (PduB) is required for correct formation of BMCs. May play a major role in binding the enzyme contents to the shell (By similarity).</text>
</comment>
<comment type="function">
    <text evidence="4">Expression of a cosmid containing the full 21-gene pdu operon in E.coli allows E.coli to grow on 1,2-propanediol (1,2-PD) with the appearance of BMCs in its cytoplasm.</text>
</comment>
<comment type="function">
    <text evidence="9">The 1,2-PD-specific bacterial microcompartment (BMC) concentrates low levels of 1,2-PD catabolic enzymes, concentrates volatile reaction intermediates thus enhancing pathway flux and keeps the level of toxic, mutagenic propionaldehyde low.</text>
</comment>
<comment type="pathway">
    <text evidence="4">Polyol metabolism; 1,2-propanediol degradation.</text>
</comment>
<comment type="subunit">
    <text evidence="1 5">Homotrimerizes to form a pseudohexamer with a central pore. The trimers pack into an array (By similarity). Both forms interact with shell protein PduA (PubMed:20417607).</text>
</comment>
<comment type="subcellular location">
    <subcellularLocation>
        <location evidence="4 5">Bacterial microcompartment</location>
    </subcellularLocation>
</comment>
<comment type="alternative products">
    <event type="alternative promoter"/>
    <isoform>
        <id>B1VB63-1</id>
        <name>PduB</name>
        <sequence type="displayed"/>
    </isoform>
    <isoform>
        <id>B1VB63-2</id>
        <name>PduB'</name>
        <sequence type="described" ref="VSP_061271"/>
    </isoform>
</comment>
<comment type="domain">
    <text evidence="8">Has 2 BMC domains which can evolve independently of each other.</text>
</comment>
<comment type="PTM">
    <text evidence="4">In purified BMCs seen as a 30.0 kDa and 25.0 kDa form; the smaller form is called PduB'.</text>
</comment>
<comment type="disruption phenotype">
    <text evidence="4">When the whole pdu operon except this gene is expressed in E.coli no BMCs are made; with the whole operon many BMCs are produced in E.coli.</text>
</comment>
<comment type="biotechnology">
    <text evidence="5 6">Artificial BMCs can be made in E.coli by expressing pduA-pduB/B'-pduJ-pduK-pduN-pduU-pduT (in this order); pduT and pduU are optional, while pduA, pduB/B', pduJ, pduK and pduN are essential. A construct with the reversed gene order does not make BMCs (PubMed:20417607). Ethanogenic BMCs can be made in E.coli by targeting pyruvate decarboxylase (pdc) and alcohol dehydrogenase (adh) to them. PduP(1-18)-Pdc and PduD(1-18)-Adh strains targeted to the BMC (PduA, PduB, PduJ, PduK, PduN, PduU) make significantly more ethanol than strains where Pdc and Adh are not targeted to the BMC (PubMed:24933391).</text>
</comment>
<comment type="similarity">
    <text evidence="3">Belongs to the EutL/PduB family.</text>
</comment>
<reference key="1">
    <citation type="journal article" date="2008" name="J. Biol. Chem.">
        <title>Biochemical and Structural Insights into Bacterial Organelle Form and Biogenesis.</title>
        <authorList>
            <person name="Parsons J.B."/>
            <person name="Dinesh S.D."/>
            <person name="Deery E."/>
            <person name="Leech H.K."/>
            <person name="Brindley A.A."/>
            <person name="Heldt D."/>
            <person name="Frank S."/>
            <person name="Smales C.M."/>
            <person name="Lunsdorf H."/>
            <person name="Rambach A."/>
            <person name="Gass M.H."/>
            <person name="Bleloch A."/>
            <person name="McClean K.J."/>
            <person name="Munro A.W."/>
            <person name="Rigby S.E.J."/>
            <person name="Warren M.J."/>
            <person name="Prentice M.B."/>
        </authorList>
    </citation>
    <scope>NUCLEOTIDE SEQUENCE [GENOMIC DNA]</scope>
    <scope>FUNCTION</scope>
    <scope>IDENTIFICATION BY MASS SPECTROMETRY</scope>
    <scope>PDUB AND PDUB' ISOFORMS</scope>
    <scope>PATHWAY</scope>
    <scope>SUBCELLULAR LOCATION</scope>
    <scope>DISRUPTION PHENOTYPE</scope>
    <scope>MUTAGENESIS OF MET-38</scope>
</reference>
<reference key="2">
    <citation type="journal article" date="2010" name="Mol. Cell">
        <title>Synthesis of empty bacterial microcompartments, directed organelle protein incorporation, and evidence of filament-associated organelle movement.</title>
        <authorList>
            <person name="Parsons J.B."/>
            <person name="Frank S."/>
            <person name="Bhella D."/>
            <person name="Liang M."/>
            <person name="Prentice M.B."/>
            <person name="Mulvihill D.P."/>
            <person name="Warren M.J."/>
        </authorList>
    </citation>
    <scope>FUNCTION</scope>
    <scope>INTERACTION WITH PDUA</scope>
    <scope>SUBUNIT</scope>
    <scope>SUBCELLULAR LOCATION</scope>
    <scope>BIOTECHNOLOGY (ARTIFICIAL BMCS)</scope>
</reference>
<reference key="3">
    <citation type="journal article" date="2014" name="ACS Synth. Biol.">
        <title>Solution structure of a bacterial microcompartment targeting peptide and its application in the construction of an ethanol bioreactor.</title>
        <authorList>
            <person name="Lawrence A.D."/>
            <person name="Frank S."/>
            <person name="Newnham S."/>
            <person name="Lee M.J."/>
            <person name="Brown I.R."/>
            <person name="Xue W.F."/>
            <person name="Rowe M.L."/>
            <person name="Mulvihill D.P."/>
            <person name="Prentice M.B."/>
            <person name="Howard M.J."/>
            <person name="Warren M.J."/>
        </authorList>
    </citation>
    <scope>BIOTECHNOLOGY</scope>
</reference>
<organism>
    <name type="scientific">Citrobacter freundii</name>
    <dbReference type="NCBI Taxonomy" id="546"/>
    <lineage>
        <taxon>Bacteria</taxon>
        <taxon>Pseudomonadati</taxon>
        <taxon>Pseudomonadota</taxon>
        <taxon>Gammaproteobacteria</taxon>
        <taxon>Enterobacterales</taxon>
        <taxon>Enterobacteriaceae</taxon>
        <taxon>Citrobacter</taxon>
        <taxon>Citrobacter freundii complex</taxon>
    </lineage>
</organism>
<name>PDUB_CITFR</name>
<feature type="chain" id="PRO_0000454247" description="Bacterial microcompartment shell protein PduB">
    <location>
        <begin position="1"/>
        <end position="270"/>
    </location>
</feature>
<feature type="domain" description="BMC circularly permuted 1" evidence="3">
    <location>
        <begin position="47"/>
        <end position="152"/>
    </location>
</feature>
<feature type="domain" description="BMC circularly permuted 2" evidence="3">
    <location>
        <begin position="154"/>
        <end position="262"/>
    </location>
</feature>
<feature type="splice variant" id="VSP_061271" description="In isoform PduB'." evidence="4">
    <location>
        <begin position="1"/>
        <end position="37"/>
    </location>
</feature>
<feature type="mutagenesis site" description="PduB' no longer produced in E.coli." evidence="4">
    <original>M</original>
    <variation>A</variation>
    <location>
        <position position="38"/>
    </location>
</feature>